<evidence type="ECO:0000250" key="1"/>
<evidence type="ECO:0000255" key="2"/>
<evidence type="ECO:0000255" key="3">
    <source>
        <dbReference type="PROSITE-ProRule" id="PRU01360"/>
    </source>
</evidence>
<evidence type="ECO:0000305" key="4"/>
<gene>
    <name type="primary">fyuA</name>
    <name type="ordered locus">YE2622</name>
</gene>
<reference key="1">
    <citation type="journal article" date="1995" name="J. Bacteriol.">
        <title>Evidence for two evolutionary lineages of highly pathogenic Yersinia species.</title>
        <authorList>
            <person name="Rakin A."/>
            <person name="Urbitsch P."/>
            <person name="Heesemann J."/>
        </authorList>
    </citation>
    <scope>NUCLEOTIDE SEQUENCE [GENOMIC DNA]</scope>
</reference>
<reference key="2">
    <citation type="journal article" date="2006" name="PLoS Genet.">
        <title>The complete genome sequence and comparative genome analysis of the high pathogenicity Yersinia enterocolitica strain 8081.</title>
        <authorList>
            <person name="Thomson N.R."/>
            <person name="Howard S."/>
            <person name="Wren B.W."/>
            <person name="Holden M.T.G."/>
            <person name="Crossman L."/>
            <person name="Challis G.L."/>
            <person name="Churcher C."/>
            <person name="Mungall K."/>
            <person name="Brooks K."/>
            <person name="Chillingworth T."/>
            <person name="Feltwell T."/>
            <person name="Abdellah Z."/>
            <person name="Hauser H."/>
            <person name="Jagels K."/>
            <person name="Maddison M."/>
            <person name="Moule S."/>
            <person name="Sanders M."/>
            <person name="Whitehead S."/>
            <person name="Quail M.A."/>
            <person name="Dougan G."/>
            <person name="Parkhill J."/>
            <person name="Prentice M.B."/>
        </authorList>
    </citation>
    <scope>NUCLEOTIDE SEQUENCE [LARGE SCALE GENOMIC DNA]</scope>
    <source>
        <strain>NCTC 13174 / 8081</strain>
    </source>
</reference>
<name>FYUA_YERE8</name>
<feature type="signal peptide" evidence="2">
    <location>
        <begin position="1"/>
        <end position="22"/>
    </location>
</feature>
<feature type="chain" id="PRO_0000281774" description="Pesticin receptor">
    <location>
        <begin position="23"/>
        <end position="673"/>
    </location>
</feature>
<feature type="domain" description="TBDR plug" evidence="3">
    <location>
        <begin position="41"/>
        <end position="155"/>
    </location>
</feature>
<feature type="domain" description="TBDR beta-barrel" evidence="3">
    <location>
        <begin position="160"/>
        <end position="672"/>
    </location>
</feature>
<feature type="short sequence motif" description="TonB box">
    <location>
        <begin position="30"/>
        <end position="37"/>
    </location>
</feature>
<feature type="short sequence motif" description="TonB C-terminal box">
    <location>
        <begin position="657"/>
        <end position="673"/>
    </location>
</feature>
<accession>A1JTG3</accession>
<accession>P46360</accession>
<sequence>MKMTRLYPLALGGLLLPAIANAQTSQQDESTLEVTASKQSSRSASANNVSSTVVSAPELSDAGVTASDKLPRVLPGLNIENSGNMLFSTISLRGVSSAQDFYNPAVTLYVDGVPQLSTNTIQALTDVQSVELLRGPQGTLYGKSAQGGIINIVTQQPDSTPRGYIEGGVSSRDSYRSKFNLSGPIQDGLLYGSVTLLRQVDDGDMINPATGSDDLGGTRASIGNVKLRLAPDDQPWEMGFAASRECTRATQDAYVGWNDIKGRKLSLSDGSPDPYMRRCTDSQTLSGKYTTDDWVFNLISAWQQQHYSRTFPSGSLIVNMPQRWNQDVQELRAATLGDARTVDMVFGLYRQNTREKLNSAYDMPTMPYLSSTGYTTAETLAAYSDLTWHLTDRFDIGGGVRFSHDKSSTQYHGSMLGNPFGDQGKSNDDQVLGQLSAGYMLTDDWRVYTRIAQGYKPSGYNIVPTAGLDAKPFVAEKSINYELGTRYETADVTLQAATFYTHTKDMQLYSGPVGMQTLSNAGKADATGVELEAKWRFAPGWSWDINGNVIRSEFTNDSELYHGNRVPFVPRYGAGSSVNGVIDTRYGALMPRLAVNLVGPHYFDGDNQLRQGTYATLDSSLGWQATERINISVHVDNLFDRRYRTYGYMNGSSAVAQVNMGRTVGINTRIDFF</sequence>
<comment type="function">
    <text evidence="1">Receptor for the bacteriocin pesticin and for the siderophore yersiniabactin.</text>
</comment>
<comment type="subcellular location">
    <subcellularLocation>
        <location evidence="3">Cell outer membrane</location>
        <topology evidence="3">Multi-pass membrane protein</topology>
    </subcellularLocation>
</comment>
<comment type="similarity">
    <text evidence="4">Belongs to the TonB-dependent receptor family.</text>
</comment>
<proteinExistence type="inferred from homology"/>
<dbReference type="EMBL" id="Z35486">
    <property type="protein sequence ID" value="CAA84621.1"/>
    <property type="molecule type" value="Genomic_DNA"/>
</dbReference>
<dbReference type="EMBL" id="AM286415">
    <property type="protein sequence ID" value="CAL12659.1"/>
    <property type="molecule type" value="Genomic_DNA"/>
</dbReference>
<dbReference type="RefSeq" id="WP_011816644.1">
    <property type="nucleotide sequence ID" value="NC_008800.1"/>
</dbReference>
<dbReference type="RefSeq" id="YP_001006820.1">
    <property type="nucleotide sequence ID" value="NC_008800.1"/>
</dbReference>
<dbReference type="SMR" id="A1JTG3"/>
<dbReference type="KEGG" id="yen:YE2622"/>
<dbReference type="PATRIC" id="fig|393305.7.peg.2785"/>
<dbReference type="eggNOG" id="COG4771">
    <property type="taxonomic scope" value="Bacteria"/>
</dbReference>
<dbReference type="HOGENOM" id="CLU_008287_15_2_6"/>
<dbReference type="OrthoDB" id="127311at2"/>
<dbReference type="Proteomes" id="UP000000642">
    <property type="component" value="Chromosome"/>
</dbReference>
<dbReference type="GO" id="GO:0009279">
    <property type="term" value="C:cell outer membrane"/>
    <property type="evidence" value="ECO:0007669"/>
    <property type="project" value="UniProtKB-SubCell"/>
</dbReference>
<dbReference type="GO" id="GO:0015343">
    <property type="term" value="F:siderophore-iron transmembrane transporter activity"/>
    <property type="evidence" value="ECO:0007669"/>
    <property type="project" value="InterPro"/>
</dbReference>
<dbReference type="GO" id="GO:0038023">
    <property type="term" value="F:signaling receptor activity"/>
    <property type="evidence" value="ECO:0007669"/>
    <property type="project" value="InterPro"/>
</dbReference>
<dbReference type="CDD" id="cd01347">
    <property type="entry name" value="ligand_gated_channel"/>
    <property type="match status" value="1"/>
</dbReference>
<dbReference type="Gene3D" id="2.40.170.20">
    <property type="entry name" value="TonB-dependent receptor, beta-barrel domain"/>
    <property type="match status" value="1"/>
</dbReference>
<dbReference type="InterPro" id="IPR012910">
    <property type="entry name" value="Plug_dom"/>
</dbReference>
<dbReference type="InterPro" id="IPR039426">
    <property type="entry name" value="TonB-dep_rcpt-like"/>
</dbReference>
<dbReference type="InterPro" id="IPR000531">
    <property type="entry name" value="TonB-dep_rcpt_b-brl"/>
</dbReference>
<dbReference type="InterPro" id="IPR036942">
    <property type="entry name" value="TonB_rcpt_b-brl_sf"/>
</dbReference>
<dbReference type="InterPro" id="IPR010105">
    <property type="entry name" value="TonB_sidphr_rcpt"/>
</dbReference>
<dbReference type="NCBIfam" id="TIGR01783">
    <property type="entry name" value="TonB-siderophor"/>
    <property type="match status" value="1"/>
</dbReference>
<dbReference type="PANTHER" id="PTHR32552">
    <property type="entry name" value="FERRICHROME IRON RECEPTOR-RELATED"/>
    <property type="match status" value="1"/>
</dbReference>
<dbReference type="PANTHER" id="PTHR32552:SF81">
    <property type="entry name" value="TONB-DEPENDENT OUTER MEMBRANE RECEPTOR"/>
    <property type="match status" value="1"/>
</dbReference>
<dbReference type="Pfam" id="PF07715">
    <property type="entry name" value="Plug"/>
    <property type="match status" value="1"/>
</dbReference>
<dbReference type="Pfam" id="PF00593">
    <property type="entry name" value="TonB_dep_Rec_b-barrel"/>
    <property type="match status" value="1"/>
</dbReference>
<dbReference type="SUPFAM" id="SSF56935">
    <property type="entry name" value="Porins"/>
    <property type="match status" value="1"/>
</dbReference>
<dbReference type="PROSITE" id="PS52016">
    <property type="entry name" value="TONB_DEPENDENT_REC_3"/>
    <property type="match status" value="1"/>
</dbReference>
<organism>
    <name type="scientific">Yersinia enterocolitica serotype O:8 / biotype 1B (strain NCTC 13174 / 8081)</name>
    <dbReference type="NCBI Taxonomy" id="393305"/>
    <lineage>
        <taxon>Bacteria</taxon>
        <taxon>Pseudomonadati</taxon>
        <taxon>Pseudomonadota</taxon>
        <taxon>Gammaproteobacteria</taxon>
        <taxon>Enterobacterales</taxon>
        <taxon>Yersiniaceae</taxon>
        <taxon>Yersinia</taxon>
    </lineage>
</organism>
<protein>
    <recommendedName>
        <fullName>Pesticin receptor</fullName>
    </recommendedName>
    <alternativeName>
        <fullName>IPR65</fullName>
    </alternativeName>
    <alternativeName>
        <fullName>IRPC</fullName>
    </alternativeName>
</protein>
<keyword id="KW-0998">Cell outer membrane</keyword>
<keyword id="KW-0406">Ion transport</keyword>
<keyword id="KW-0408">Iron</keyword>
<keyword id="KW-0410">Iron transport</keyword>
<keyword id="KW-0472">Membrane</keyword>
<keyword id="KW-0675">Receptor</keyword>
<keyword id="KW-0732">Signal</keyword>
<keyword id="KW-0798">TonB box</keyword>
<keyword id="KW-0812">Transmembrane</keyword>
<keyword id="KW-1134">Transmembrane beta strand</keyword>
<keyword id="KW-0813">Transport</keyword>